<comment type="function">
    <text>Possible role in intracellular signaling and cytoskeleton dynamics at the Golgi.</text>
</comment>
<comment type="interaction">
    <interactant intactId="EBI-949255">
        <id>Q58EX7</id>
    </interactant>
    <interactant intactId="EBI-2809489">
        <id>Q9NQ94</id>
        <label>A1CF</label>
    </interactant>
    <organismsDiffer>false</organismsDiffer>
    <experiments>3</experiments>
</comment>
<comment type="interaction">
    <interactant intactId="EBI-949255">
        <id>Q58EX7</id>
    </interactant>
    <interactant intactId="EBI-602199">
        <id>Q12774</id>
        <label>ARHGEF5</label>
    </interactant>
    <organismsDiffer>false</organismsDiffer>
    <experiments>3</experiments>
</comment>
<comment type="interaction">
    <interactant intactId="EBI-949255">
        <id>Q58EX7</id>
    </interactant>
    <interactant intactId="EBI-742909">
        <id>Q9H6L4</id>
        <label>ARMC7</label>
    </interactant>
    <organismsDiffer>false</organismsDiffer>
    <experiments>3</experiments>
</comment>
<comment type="interaction">
    <interactant intactId="EBI-949255">
        <id>Q58EX7</id>
    </interactant>
    <interactant intactId="EBI-745073">
        <id>Q9BXY8</id>
        <label>BEX2</label>
    </interactant>
    <organismsDiffer>false</organismsDiffer>
    <experiments>3</experiments>
</comment>
<comment type="interaction">
    <interactant intactId="EBI-949255">
        <id>Q58EX7</id>
    </interactant>
    <interactant intactId="EBI-744556">
        <id>Q96HB5</id>
        <label>CCDC120</label>
    </interactant>
    <organismsDiffer>false</organismsDiffer>
    <experiments>3</experiments>
</comment>
<comment type="interaction">
    <interactant intactId="EBI-949255">
        <id>Q58EX7</id>
    </interactant>
    <interactant intactId="EBI-711290">
        <id>P42773</id>
        <label>CDKN2C</label>
    </interactant>
    <organismsDiffer>false</organismsDiffer>
    <experiments>3</experiments>
</comment>
<comment type="interaction">
    <interactant intactId="EBI-949255">
        <id>Q58EX7</id>
    </interactant>
    <interactant intactId="EBI-741528">
        <id>Q9UKJ5</id>
        <label>CHIC2</label>
    </interactant>
    <organismsDiffer>false</organismsDiffer>
    <experiments>3</experiments>
</comment>
<comment type="interaction">
    <interactant intactId="EBI-949255">
        <id>Q58EX7</id>
    </interactant>
    <interactant intactId="EBI-3924013">
        <id>Q9BTE7</id>
        <label>DCUN1D5</label>
    </interactant>
    <organismsDiffer>false</organismsDiffer>
    <experiments>3</experiments>
</comment>
<comment type="interaction">
    <interactant intactId="EBI-949255">
        <id>Q58EX7</id>
    </interactant>
    <interactant intactId="EBI-12082590">
        <id>Q6W0C5</id>
        <label>DPPA3</label>
    </interactant>
    <organismsDiffer>false</organismsDiffer>
    <experiments>3</experiments>
</comment>
<comment type="interaction">
    <interactant intactId="EBI-949255">
        <id>Q58EX7</id>
    </interactant>
    <interactant intactId="EBI-740376">
        <id>Q86UW9</id>
        <label>DTX2</label>
    </interactant>
    <organismsDiffer>false</organismsDiffer>
    <experiments>3</experiments>
</comment>
<comment type="interaction">
    <interactant intactId="EBI-949255">
        <id>Q58EX7</id>
    </interactant>
    <interactant intactId="EBI-749800">
        <id>Q9UII6</id>
        <label>DUSP13B</label>
    </interactant>
    <organismsDiffer>false</organismsDiffer>
    <experiments>3</experiments>
</comment>
<comment type="interaction">
    <interactant intactId="EBI-949255">
        <id>Q58EX7</id>
    </interactant>
    <interactant intactId="EBI-719941">
        <id>Q3B820</id>
        <label>FAM161A</label>
    </interactant>
    <organismsDiffer>false</organismsDiffer>
    <experiments>3</experiments>
</comment>
<comment type="interaction">
    <interactant intactId="EBI-949255">
        <id>Q58EX7</id>
    </interactant>
    <interactant intactId="EBI-1057190">
        <id>Q7Z6J4</id>
        <label>FGD2</label>
    </interactant>
    <organismsDiffer>false</organismsDiffer>
    <experiments>3</experiments>
</comment>
<comment type="interaction">
    <interactant intactId="EBI-949255">
        <id>Q58EX7</id>
    </interactant>
    <interactant intactId="EBI-6672518">
        <id>P23771-2</id>
        <label>GATA3</label>
    </interactant>
    <organismsDiffer>false</organismsDiffer>
    <experiments>3</experiments>
</comment>
<comment type="interaction">
    <interactant intactId="EBI-949255">
        <id>Q58EX7</id>
    </interactant>
    <interactant intactId="EBI-10188645">
        <id>O75603</id>
        <label>GCM2</label>
    </interactant>
    <organismsDiffer>false</organismsDiffer>
    <experiments>3</experiments>
</comment>
<comment type="interaction">
    <interactant intactId="EBI-949255">
        <id>Q58EX7</id>
    </interactant>
    <interactant intactId="EBI-748043">
        <id>O43708</id>
        <label>GSTZ1</label>
    </interactant>
    <organismsDiffer>false</organismsDiffer>
    <experiments>3</experiments>
</comment>
<comment type="interaction">
    <interactant intactId="EBI-949255">
        <id>Q58EX7</id>
    </interactant>
    <interactant intactId="EBI-9834454">
        <id>P08631-2</id>
        <label>HCK</label>
    </interactant>
    <organismsDiffer>false</organismsDiffer>
    <experiments>3</experiments>
</comment>
<comment type="interaction">
    <interactant intactId="EBI-949255">
        <id>Q58EX7</id>
    </interactant>
    <interactant intactId="EBI-745290">
        <id>P17482</id>
        <label>HOXB9</label>
    </interactant>
    <organismsDiffer>false</organismsDiffer>
    <experiments>3</experiments>
</comment>
<comment type="interaction">
    <interactant intactId="EBI-949255">
        <id>Q58EX7</id>
    </interactant>
    <interactant intactId="EBI-1752118">
        <id>P31273</id>
        <label>HOXC8</label>
    </interactant>
    <organismsDiffer>false</organismsDiffer>
    <experiments>3</experiments>
</comment>
<comment type="interaction">
    <interactant intactId="EBI-949255">
        <id>Q58EX7</id>
    </interactant>
    <interactant intactId="EBI-2430095">
        <id>P12035</id>
        <label>KRT3</label>
    </interactant>
    <organismsDiffer>false</organismsDiffer>
    <experiments>3</experiments>
</comment>
<comment type="interaction">
    <interactant intactId="EBI-949255">
        <id>Q58EX7</id>
    </interactant>
    <interactant intactId="EBI-2949715">
        <id>O95678</id>
        <label>KRT75</label>
    </interactant>
    <organismsDiffer>false</organismsDiffer>
    <experiments>3</experiments>
</comment>
<comment type="interaction">
    <interactant intactId="EBI-949255">
        <id>Q58EX7</id>
    </interactant>
    <interactant intactId="EBI-2339737">
        <id>Q96EH3</id>
        <label>MALSU1</label>
    </interactant>
    <organismsDiffer>false</organismsDiffer>
    <experiments>3</experiments>
</comment>
<comment type="interaction">
    <interactant intactId="EBI-949255">
        <id>Q58EX7</id>
    </interactant>
    <interactant intactId="EBI-352602">
        <id>P43243</id>
        <label>MATR3</label>
    </interactant>
    <organismsDiffer>false</organismsDiffer>
    <experiments>3</experiments>
</comment>
<comment type="interaction">
    <interactant intactId="EBI-949255">
        <id>Q58EX7</id>
    </interactant>
    <interactant intactId="EBI-724076">
        <id>Q99750</id>
        <label>MDFI</label>
    </interactant>
    <organismsDiffer>false</organismsDiffer>
    <experiments>3</experiments>
</comment>
<comment type="interaction">
    <interactant intactId="EBI-949255">
        <id>Q58EX7</id>
    </interactant>
    <interactant intactId="EBI-1051435">
        <id>P53582</id>
        <label>METAP1</label>
    </interactant>
    <organismsDiffer>false</organismsDiffer>
    <experiments>3</experiments>
</comment>
<comment type="interaction">
    <interactant intactId="EBI-949255">
        <id>Q58EX7</id>
    </interactant>
    <interactant intactId="EBI-14086479">
        <id>Q8IVT4</id>
        <label>MGC50722</label>
    </interactant>
    <organismsDiffer>false</organismsDiffer>
    <experiments>3</experiments>
</comment>
<comment type="interaction">
    <interactant intactId="EBI-949255">
        <id>Q58EX7</id>
    </interactant>
    <interactant intactId="EBI-10699187">
        <id>Q8IXL7-2</id>
        <label>MSRB3</label>
    </interactant>
    <organismsDiffer>false</organismsDiffer>
    <experiments>3</experiments>
</comment>
<comment type="interaction">
    <interactant intactId="EBI-949255">
        <id>Q58EX7</id>
    </interactant>
    <interactant intactId="EBI-714236">
        <id>Q13330</id>
        <label>MTA1</label>
    </interactant>
    <organismsDiffer>false</organismsDiffer>
    <experiments>3</experiments>
</comment>
<comment type="interaction">
    <interactant intactId="EBI-949255">
        <id>Q58EX7</id>
    </interactant>
    <interactant intactId="EBI-10318831">
        <id>Q9P2K5-2</id>
        <label>MYEF2</label>
    </interactant>
    <organismsDiffer>false</organismsDiffer>
    <experiments>3</experiments>
</comment>
<comment type="interaction">
    <interactant intactId="EBI-949255">
        <id>Q58EX7</id>
    </interactant>
    <interactant intactId="EBI-744402">
        <id>Q9NP98</id>
        <label>MYOZ1</label>
    </interactant>
    <organismsDiffer>false</organismsDiffer>
    <experiments>3</experiments>
</comment>
<comment type="interaction">
    <interactant intactId="EBI-949255">
        <id>Q58EX7</id>
    </interactant>
    <interactant intactId="EBI-8656665">
        <id>Q8N6N6</id>
        <label>NATD1</label>
    </interactant>
    <organismsDiffer>false</organismsDiffer>
    <experiments>3</experiments>
</comment>
<comment type="interaction">
    <interactant intactId="EBI-949255">
        <id>Q58EX7</id>
    </interactant>
    <interactant intactId="EBI-740446">
        <id>P32242</id>
        <label>OTX1</label>
    </interactant>
    <organismsDiffer>false</organismsDiffer>
    <experiments>3</experiments>
</comment>
<comment type="interaction">
    <interactant intactId="EBI-949255">
        <id>Q58EX7</id>
    </interactant>
    <interactant intactId="EBI-709807">
        <id>P16118</id>
        <label>PFKFB1</label>
    </interactant>
    <organismsDiffer>false</organismsDiffer>
    <experiments>3</experiments>
</comment>
<comment type="interaction">
    <interactant intactId="EBI-949255">
        <id>Q58EX7</id>
    </interactant>
    <interactant intactId="EBI-10987518">
        <id>Q99959-2</id>
        <label>PKP2</label>
    </interactant>
    <organismsDiffer>false</organismsDiffer>
    <experiments>3</experiments>
</comment>
<comment type="interaction">
    <interactant intactId="EBI-949255">
        <id>Q58EX7</id>
    </interactant>
    <interactant intactId="EBI-2798416">
        <id>Q99633</id>
        <label>PRPF18</label>
    </interactant>
    <organismsDiffer>false</organismsDiffer>
    <experiments>3</experiments>
</comment>
<comment type="interaction">
    <interactant intactId="EBI-949255">
        <id>Q58EX7</id>
    </interactant>
    <interactant intactId="EBI-1567797">
        <id>Q8WWY3</id>
        <label>PRPF31</label>
    </interactant>
    <organismsDiffer>false</organismsDiffer>
    <experiments>3</experiments>
</comment>
<comment type="interaction">
    <interactant intactId="EBI-949255">
        <id>Q58EX7</id>
    </interactant>
    <interactant intactId="EBI-372273">
        <id>P20618</id>
        <label>PSMB1</label>
    </interactant>
    <organismsDiffer>false</organismsDiffer>
    <experiments>3</experiments>
</comment>
<comment type="interaction">
    <interactant intactId="EBI-949255">
        <id>Q58EX7</id>
    </interactant>
    <interactant intactId="EBI-366017">
        <id>Q13671</id>
        <label>RIN1</label>
    </interactant>
    <organismsDiffer>false</organismsDiffer>
    <experiments>3</experiments>
</comment>
<comment type="interaction">
    <interactant intactId="EBI-949255">
        <id>Q58EX7</id>
    </interactant>
    <interactant intactId="EBI-3957636">
        <id>Q8IYX7</id>
        <label>SAXO1</label>
    </interactant>
    <organismsDiffer>false</organismsDiffer>
    <experiments>3</experiments>
</comment>
<comment type="interaction">
    <interactant intactId="EBI-949255">
        <id>Q58EX7</id>
    </interactant>
    <interactant intactId="EBI-12000762">
        <id>Q7Z5V6-2</id>
        <label>SAXO4</label>
    </interactant>
    <organismsDiffer>false</organismsDiffer>
    <experiments>3</experiments>
</comment>
<comment type="interaction">
    <interactant intactId="EBI-949255">
        <id>Q58EX7</id>
    </interactant>
    <interactant intactId="EBI-12233047">
        <id>Q9C0A6-3</id>
        <label>SETD5</label>
    </interactant>
    <organismsDiffer>false</organismsDiffer>
    <experiments>3</experiments>
</comment>
<comment type="interaction">
    <interactant intactId="EBI-949255">
        <id>Q58EX7</id>
    </interactant>
    <interactant intactId="EBI-747035">
        <id>Q9H788</id>
        <label>SH2D4A</label>
    </interactant>
    <organismsDiffer>false</organismsDiffer>
    <experiments>3</experiments>
</comment>
<comment type="interaction">
    <interactant intactId="EBI-949255">
        <id>Q58EX7</id>
    </interactant>
    <interactant intactId="EBI-12037847">
        <id>Q6ZSJ9</id>
        <label>SHISA6</label>
    </interactant>
    <organismsDiffer>false</organismsDiffer>
    <experiments>3</experiments>
</comment>
<comment type="interaction">
    <interactant intactId="EBI-949255">
        <id>Q58EX7</id>
    </interactant>
    <interactant intactId="EBI-743675">
        <id>Q15475</id>
        <label>SIX1</label>
    </interactant>
    <organismsDiffer>false</organismsDiffer>
    <experiments>3</experiments>
</comment>
<comment type="interaction">
    <interactant intactId="EBI-949255">
        <id>Q58EX7</id>
    </interactant>
    <interactant intactId="EBI-750494">
        <id>P49901</id>
        <label>SMCP</label>
    </interactant>
    <organismsDiffer>false</organismsDiffer>
    <experiments>3</experiments>
</comment>
<comment type="interaction">
    <interactant intactId="EBI-949255">
        <id>Q58EX7</id>
    </interactant>
    <interactant intactId="EBI-2872322">
        <id>Q9H0W8</id>
        <label>SMG9</label>
    </interactant>
    <organismsDiffer>false</organismsDiffer>
    <experiments>3</experiments>
</comment>
<comment type="interaction">
    <interactant intactId="EBI-949255">
        <id>Q58EX7</id>
    </interactant>
    <interactant intactId="EBI-8787464">
        <id>Q9NU19</id>
        <label>TBC1D22B</label>
    </interactant>
    <organismsDiffer>false</organismsDiffer>
    <experiments>3</experiments>
</comment>
<comment type="interaction">
    <interactant intactId="EBI-949255">
        <id>Q58EX7</id>
    </interactant>
    <interactant intactId="EBI-12085364">
        <id>O95935</id>
        <label>TBX18</label>
    </interactant>
    <organismsDiffer>false</organismsDiffer>
    <experiments>3</experiments>
</comment>
<comment type="interaction">
    <interactant intactId="EBI-949255">
        <id>Q58EX7</id>
    </interactant>
    <interactant intactId="EBI-8644516">
        <id>Q9BXF9</id>
        <label>TEKT3</label>
    </interactant>
    <organismsDiffer>false</organismsDiffer>
    <experiments>3</experiments>
</comment>
<comment type="interaction">
    <interactant intactId="EBI-949255">
        <id>Q58EX7</id>
    </interactant>
    <interactant intactId="EBI-744726">
        <id>Q8NEK8</id>
        <label>TENT5D</label>
    </interactant>
    <organismsDiffer>false</organismsDiffer>
    <experiments>3</experiments>
</comment>
<comment type="interaction">
    <interactant intactId="EBI-949255">
        <id>Q58EX7</id>
    </interactant>
    <interactant intactId="EBI-11952651">
        <id>Q7Z6R9</id>
        <label>TFAP2D</label>
    </interactant>
    <organismsDiffer>false</organismsDiffer>
    <experiments>3</experiments>
</comment>
<comment type="interaction">
    <interactant intactId="EBI-949255">
        <id>Q58EX7</id>
    </interactant>
    <interactant intactId="EBI-357061">
        <id>Q92734</id>
        <label>TFG</label>
    </interactant>
    <organismsDiffer>false</organismsDiffer>
    <experiments>3</experiments>
</comment>
<comment type="interaction">
    <interactant intactId="EBI-949255">
        <id>Q58EX7</id>
    </interactant>
    <interactant intactId="EBI-3918381">
        <id>Q96PN8</id>
        <label>TSSK3</label>
    </interactant>
    <organismsDiffer>false</organismsDiffer>
    <experiments>3</experiments>
</comment>
<comment type="interaction">
    <interactant intactId="EBI-949255">
        <id>Q58EX7</id>
    </interactant>
    <interactant intactId="EBI-9090990">
        <id>Q5W5X9-3</id>
        <label>TTC23</label>
    </interactant>
    <organismsDiffer>false</organismsDiffer>
    <experiments>3</experiments>
</comment>
<comment type="interaction">
    <interactant intactId="EBI-949255">
        <id>Q58EX7</id>
    </interactant>
    <interactant intactId="EBI-743272">
        <id>O75604</id>
        <label>USP2</label>
    </interactant>
    <organismsDiffer>false</organismsDiffer>
    <experiments>3</experiments>
</comment>
<comment type="interaction">
    <interactant intactId="EBI-949255">
        <id>Q58EX7</id>
    </interactant>
    <interactant intactId="EBI-2559305">
        <id>A5D8V6</id>
        <label>VPS37C</label>
    </interactant>
    <organismsDiffer>false</organismsDiffer>
    <experiments>3</experiments>
</comment>
<comment type="interaction">
    <interactant intactId="EBI-949255">
        <id>Q58EX7</id>
    </interactant>
    <interactant intactId="EBI-3937908">
        <id>Q8WYQ9</id>
        <label>ZCCHC14</label>
    </interactant>
    <organismsDiffer>false</organismsDiffer>
    <experiments>3</experiments>
</comment>
<comment type="interaction">
    <interactant intactId="EBI-949255">
        <id>Q58EX7</id>
    </interactant>
    <interactant intactId="EBI-11742222">
        <id>Q9UQR1-2</id>
        <label>ZNF148</label>
    </interactant>
    <organismsDiffer>false</organismsDiffer>
    <experiments>3</experiments>
</comment>
<comment type="interaction">
    <interactant intactId="EBI-949255">
        <id>Q58EX7</id>
    </interactant>
    <interactant intactId="EBI-11993110">
        <id>Q9P2F9</id>
        <label>ZNF319</label>
    </interactant>
    <organismsDiffer>false</organismsDiffer>
    <experiments>3</experiments>
</comment>
<comment type="interaction">
    <interactant intactId="EBI-949255">
        <id>Q58EX7</id>
    </interactant>
    <interactant intactId="EBI-11985915">
        <id>Q5T619</id>
        <label>ZNF648</label>
    </interactant>
    <organismsDiffer>false</organismsDiffer>
    <experiments>3</experiments>
</comment>
<comment type="interaction">
    <interactant intactId="EBI-21503705">
        <id>Q58EX7-2</id>
    </interactant>
    <interactant intactId="EBI-762076">
        <id>P21810</id>
        <label>BGN</label>
    </interactant>
    <organismsDiffer>false</organismsDiffer>
    <experiments>3</experiments>
</comment>
<comment type="interaction">
    <interactant intactId="EBI-21503705">
        <id>Q58EX7-2</id>
    </interactant>
    <interactant intactId="EBI-718729">
        <id>P55212</id>
        <label>CASP6</label>
    </interactant>
    <organismsDiffer>false</organismsDiffer>
    <experiments>3</experiments>
</comment>
<comment type="interaction">
    <interactant intactId="EBI-21503705">
        <id>Q58EX7-2</id>
    </interactant>
    <interactant intactId="EBI-745535">
        <id>Q8NI60</id>
        <label>COQ8A</label>
    </interactant>
    <organismsDiffer>false</organismsDiffer>
    <experiments>3</experiments>
</comment>
<comment type="interaction">
    <interactant intactId="EBI-21503705">
        <id>Q58EX7-2</id>
    </interactant>
    <interactant intactId="EBI-25852368">
        <id>O75460-2</id>
        <label>ERN1</label>
    </interactant>
    <organismsDiffer>false</organismsDiffer>
    <experiments>3</experiments>
</comment>
<comment type="interaction">
    <interactant intactId="EBI-21503705">
        <id>Q58EX7-2</id>
    </interactant>
    <interactant intactId="EBI-10226858">
        <id>Q0VDC6</id>
        <label>FKBP1A</label>
    </interactant>
    <organismsDiffer>false</organismsDiffer>
    <experiments>3</experiments>
</comment>
<comment type="interaction">
    <interactant intactId="EBI-21503705">
        <id>Q58EX7-2</id>
    </interactant>
    <interactant intactId="EBI-747754">
        <id>P28799</id>
        <label>GRN</label>
    </interactant>
    <organismsDiffer>false</organismsDiffer>
    <experiments>3</experiments>
</comment>
<comment type="interaction">
    <interactant intactId="EBI-21503705">
        <id>Q58EX7-2</id>
    </interactant>
    <interactant intactId="EBI-356991">
        <id>P54652</id>
        <label>HSPA2</label>
    </interactant>
    <organismsDiffer>false</organismsDiffer>
    <experiments>3</experiments>
</comment>
<comment type="interaction">
    <interactant intactId="EBI-21503705">
        <id>Q58EX7-2</id>
    </interactant>
    <interactant intactId="EBI-352682">
        <id>P04792</id>
        <label>HSPB1</label>
    </interactant>
    <organismsDiffer>false</organismsDiffer>
    <experiments>3</experiments>
</comment>
<comment type="interaction">
    <interactant intactId="EBI-21503705">
        <id>Q58EX7-2</id>
    </interactant>
    <interactant intactId="EBI-10975473">
        <id>O60333-2</id>
        <label>KIF1B</label>
    </interactant>
    <organismsDiffer>false</organismsDiffer>
    <experiments>3</experiments>
</comment>
<comment type="interaction">
    <interactant intactId="EBI-21503705">
        <id>Q58EX7-2</id>
    </interactant>
    <interactant intactId="EBI-948266">
        <id>O14901</id>
        <label>KLF11</label>
    </interactant>
    <organismsDiffer>false</organismsDiffer>
    <experiments>3</experiments>
</comment>
<comment type="interaction">
    <interactant intactId="EBI-21503705">
        <id>Q58EX7-2</id>
    </interactant>
    <interactant intactId="EBI-21591415">
        <id>P13473-2</id>
        <label>LAMP2</label>
    </interactant>
    <organismsDiffer>false</organismsDiffer>
    <experiments>3</experiments>
</comment>
<comment type="interaction">
    <interactant intactId="EBI-21503705">
        <id>Q58EX7-2</id>
    </interactant>
    <interactant intactId="EBI-749195">
        <id>P60891</id>
        <label>PRPS1</label>
    </interactant>
    <organismsDiffer>false</organismsDiffer>
    <experiments>3</experiments>
</comment>
<comment type="interaction">
    <interactant intactId="EBI-21503705">
        <id>Q58EX7-2</id>
    </interactant>
    <interactant intactId="EBI-720609">
        <id>O76024</id>
        <label>WFS1</label>
    </interactant>
    <organismsDiffer>false</organismsDiffer>
    <experiments>3</experiments>
</comment>
<comment type="alternative products">
    <event type="alternative splicing"/>
    <isoform>
        <id>Q58EX7-1</id>
        <name>1</name>
        <sequence type="displayed"/>
    </isoform>
    <isoform>
        <id>Q58EX7-2</id>
        <name>2</name>
        <sequence type="described" ref="VSP_017329"/>
    </isoform>
    <isoform>
        <id>Q58EX7-3</id>
        <name>3</name>
        <name>short</name>
        <sequence type="described" ref="VSP_017330 VSP_017331"/>
    </isoform>
</comment>
<comment type="tissue specificity">
    <text evidence="4">Expressed in kidney, Leydig cells in the testis, epithelial cells in the prostate gland and Langerhans islet in the pancreas. Isoform 1 and isoform 3 are strongly expressed in Purkinje cells and to a lower extent in other neurons (at protein level). Widely expressed at low levels. More strongly expressed in testis and pancreas.</text>
</comment>
<comment type="caution">
    <text evidence="8 9">Defects in PLEKHG4 were initially thought (PubMed:16001362) to be the cause of spinocerebellar ataxia 16q22-linked. However, it was later shown (PubMed:17611710) that it is not the case. Spinocerebellar ataxia 16q22-linked, also known as spinocerebellar ataxia type 31 (SCA31), is caused by defects in BEAN gene.</text>
</comment>
<comment type="sequence caution" evidence="7">
    <conflict type="frameshift">
        <sequence resource="EMBL-CDS" id="AAH82974"/>
    </conflict>
</comment>
<comment type="sequence caution" evidence="7">
    <conflict type="erroneous initiation">
        <sequence resource="EMBL-CDS" id="BAB15765"/>
    </conflict>
</comment>
<reference key="1">
    <citation type="journal article" date="2005" name="Am. J. Hum. Genet.">
        <title>An autosomal dominant cerebellar ataxia linked to chromosome 16q22.1 is associated with a single-nucleotide substitution in the 5' untranslated region of the gene encoding a protein with spectrin repeat and Rho guanine-nucleotide exchange-factor domains.</title>
        <authorList>
            <person name="Ishikawa K."/>
            <person name="Toru S."/>
            <person name="Tsunemi T."/>
            <person name="Li M."/>
            <person name="Kobayashi K."/>
            <person name="Yokota T."/>
            <person name="Amino T."/>
            <person name="Owada K."/>
            <person name="Fujigasaki H."/>
            <person name="Sakamoto M."/>
            <person name="Tomimitsu H."/>
            <person name="Takashima M."/>
            <person name="Kumagai J."/>
            <person name="Noguchi Y."/>
            <person name="Kawashima Y."/>
            <person name="Ohkoshi N."/>
            <person name="Ishida G."/>
            <person name="Gomyoda M."/>
            <person name="Yoshida M."/>
            <person name="Hashizume Y."/>
            <person name="Saito Y."/>
            <person name="Murayama S."/>
            <person name="Yamanouchi H."/>
            <person name="Mizutani T."/>
            <person name="Kondo I."/>
            <person name="Toda T."/>
            <person name="Mizusawa H."/>
        </authorList>
    </citation>
    <scope>NUCLEOTIDE SEQUENCE [MRNA] (ISOFORMS 1 AND 3)</scope>
    <scope>TISSUE SPECIFICITY</scope>
    <source>
        <tissue>Cerebellum</tissue>
    </source>
</reference>
<reference key="2">
    <citation type="journal article" date="2004" name="Nat. Genet.">
        <title>Complete sequencing and characterization of 21,243 full-length human cDNAs.</title>
        <authorList>
            <person name="Ota T."/>
            <person name="Suzuki Y."/>
            <person name="Nishikawa T."/>
            <person name="Otsuki T."/>
            <person name="Sugiyama T."/>
            <person name="Irie R."/>
            <person name="Wakamatsu A."/>
            <person name="Hayashi K."/>
            <person name="Sato H."/>
            <person name="Nagai K."/>
            <person name="Kimura K."/>
            <person name="Makita H."/>
            <person name="Sekine M."/>
            <person name="Obayashi M."/>
            <person name="Nishi T."/>
            <person name="Shibahara T."/>
            <person name="Tanaka T."/>
            <person name="Ishii S."/>
            <person name="Yamamoto J."/>
            <person name="Saito K."/>
            <person name="Kawai Y."/>
            <person name="Isono Y."/>
            <person name="Nakamura Y."/>
            <person name="Nagahari K."/>
            <person name="Murakami K."/>
            <person name="Yasuda T."/>
            <person name="Iwayanagi T."/>
            <person name="Wagatsuma M."/>
            <person name="Shiratori A."/>
            <person name="Sudo H."/>
            <person name="Hosoiri T."/>
            <person name="Kaku Y."/>
            <person name="Kodaira H."/>
            <person name="Kondo H."/>
            <person name="Sugawara M."/>
            <person name="Takahashi M."/>
            <person name="Kanda K."/>
            <person name="Yokoi T."/>
            <person name="Furuya T."/>
            <person name="Kikkawa E."/>
            <person name="Omura Y."/>
            <person name="Abe K."/>
            <person name="Kamihara K."/>
            <person name="Katsuta N."/>
            <person name="Sato K."/>
            <person name="Tanikawa M."/>
            <person name="Yamazaki M."/>
            <person name="Ninomiya K."/>
            <person name="Ishibashi T."/>
            <person name="Yamashita H."/>
            <person name="Murakawa K."/>
            <person name="Fujimori K."/>
            <person name="Tanai H."/>
            <person name="Kimata M."/>
            <person name="Watanabe M."/>
            <person name="Hiraoka S."/>
            <person name="Chiba Y."/>
            <person name="Ishida S."/>
            <person name="Ono Y."/>
            <person name="Takiguchi S."/>
            <person name="Watanabe S."/>
            <person name="Yosida M."/>
            <person name="Hotuta T."/>
            <person name="Kusano J."/>
            <person name="Kanehori K."/>
            <person name="Takahashi-Fujii A."/>
            <person name="Hara H."/>
            <person name="Tanase T.-O."/>
            <person name="Nomura Y."/>
            <person name="Togiya S."/>
            <person name="Komai F."/>
            <person name="Hara R."/>
            <person name="Takeuchi K."/>
            <person name="Arita M."/>
            <person name="Imose N."/>
            <person name="Musashino K."/>
            <person name="Yuuki H."/>
            <person name="Oshima A."/>
            <person name="Sasaki N."/>
            <person name="Aotsuka S."/>
            <person name="Yoshikawa Y."/>
            <person name="Matsunawa H."/>
            <person name="Ichihara T."/>
            <person name="Shiohata N."/>
            <person name="Sano S."/>
            <person name="Moriya S."/>
            <person name="Momiyama H."/>
            <person name="Satoh N."/>
            <person name="Takami S."/>
            <person name="Terashima Y."/>
            <person name="Suzuki O."/>
            <person name="Nakagawa S."/>
            <person name="Senoh A."/>
            <person name="Mizoguchi H."/>
            <person name="Goto Y."/>
            <person name="Shimizu F."/>
            <person name="Wakebe H."/>
            <person name="Hishigaki H."/>
            <person name="Watanabe T."/>
            <person name="Sugiyama A."/>
            <person name="Takemoto M."/>
            <person name="Kawakami B."/>
            <person name="Yamazaki M."/>
            <person name="Watanabe K."/>
            <person name="Kumagai A."/>
            <person name="Itakura S."/>
            <person name="Fukuzumi Y."/>
            <person name="Fujimori Y."/>
            <person name="Komiyama M."/>
            <person name="Tashiro H."/>
            <person name="Tanigami A."/>
            <person name="Fujiwara T."/>
            <person name="Ono T."/>
            <person name="Yamada K."/>
            <person name="Fujii Y."/>
            <person name="Ozaki K."/>
            <person name="Hirao M."/>
            <person name="Ohmori Y."/>
            <person name="Kawabata A."/>
            <person name="Hikiji T."/>
            <person name="Kobatake N."/>
            <person name="Inagaki H."/>
            <person name="Ikema Y."/>
            <person name="Okamoto S."/>
            <person name="Okitani R."/>
            <person name="Kawakami T."/>
            <person name="Noguchi S."/>
            <person name="Itoh T."/>
            <person name="Shigeta K."/>
            <person name="Senba T."/>
            <person name="Matsumura K."/>
            <person name="Nakajima Y."/>
            <person name="Mizuno T."/>
            <person name="Morinaga M."/>
            <person name="Sasaki M."/>
            <person name="Togashi T."/>
            <person name="Oyama M."/>
            <person name="Hata H."/>
            <person name="Watanabe M."/>
            <person name="Komatsu T."/>
            <person name="Mizushima-Sugano J."/>
            <person name="Satoh T."/>
            <person name="Shirai Y."/>
            <person name="Takahashi Y."/>
            <person name="Nakagawa K."/>
            <person name="Okumura K."/>
            <person name="Nagase T."/>
            <person name="Nomura N."/>
            <person name="Kikuchi H."/>
            <person name="Masuho Y."/>
            <person name="Yamashita R."/>
            <person name="Nakai K."/>
            <person name="Yada T."/>
            <person name="Nakamura Y."/>
            <person name="Ohara O."/>
            <person name="Isogai T."/>
            <person name="Sugano S."/>
        </authorList>
    </citation>
    <scope>NUCLEOTIDE SEQUENCE [LARGE SCALE MRNA] (ISOFORM 1)</scope>
    <source>
        <tissue>Spleen</tissue>
    </source>
</reference>
<reference key="3">
    <citation type="journal article" date="2004" name="Genome Res.">
        <title>The status, quality, and expansion of the NIH full-length cDNA project: the Mammalian Gene Collection (MGC).</title>
        <authorList>
            <consortium name="The MGC Project Team"/>
        </authorList>
    </citation>
    <scope>NUCLEOTIDE SEQUENCE [LARGE SCALE MRNA] (ISOFORMS 1 AND 2)</scope>
    <source>
        <tissue>Brain</tissue>
        <tissue>Eye</tissue>
        <tissue>Skin</tissue>
    </source>
</reference>
<reference key="4">
    <citation type="journal article" date="2007" name="BMC Genomics">
        <title>The full-ORF clone resource of the German cDNA consortium.</title>
        <authorList>
            <person name="Bechtel S."/>
            <person name="Rosenfelder H."/>
            <person name="Duda A."/>
            <person name="Schmidt C.P."/>
            <person name="Ernst U."/>
            <person name="Wellenreuther R."/>
            <person name="Mehrle A."/>
            <person name="Schuster C."/>
            <person name="Bahr A."/>
            <person name="Bloecker H."/>
            <person name="Heubner D."/>
            <person name="Hoerlein A."/>
            <person name="Michel G."/>
            <person name="Wedler H."/>
            <person name="Koehrer K."/>
            <person name="Ottenwaelder B."/>
            <person name="Poustka A."/>
            <person name="Wiemann S."/>
            <person name="Schupp I."/>
        </authorList>
    </citation>
    <scope>NUCLEOTIDE SEQUENCE [LARGE SCALE MRNA] OF 278-1191 (ISOFORMS 1/2)</scope>
    <source>
        <tissue>Testis</tissue>
    </source>
</reference>
<reference key="5">
    <citation type="journal article" date="2007" name="J. Hum. Genet.">
        <title>Redefining the disease locus of 16q22.1-linked autosomal dominant cerebellar ataxia.</title>
        <authorList>
            <person name="Amino T."/>
            <person name="Ishikawa K."/>
            <person name="Toru S."/>
            <person name="Ishiguro T."/>
            <person name="Sato N."/>
            <person name="Tsunemi T."/>
            <person name="Murata M."/>
            <person name="Kobayashi K."/>
            <person name="Inazawa J."/>
            <person name="Toda T."/>
            <person name="Mizusawa H."/>
        </authorList>
    </citation>
    <scope>LACK OF INVOLVEMENT IN SPINOCEREBELLAR ATAXIA</scope>
    <scope>REDEFINITION OF THE SPINOCEREBELLAR ATAXIA LOCUS ON CHROMOSOME 16</scope>
</reference>
<reference key="6">
    <citation type="journal article" date="2008" name="Proc. Natl. Acad. Sci. U.S.A.">
        <title>A quantitative atlas of mitotic phosphorylation.</title>
        <authorList>
            <person name="Dephoure N."/>
            <person name="Zhou C."/>
            <person name="Villen J."/>
            <person name="Beausoleil S.A."/>
            <person name="Bakalarski C.E."/>
            <person name="Elledge S.J."/>
            <person name="Gygi S.P."/>
        </authorList>
    </citation>
    <scope>PHOSPHORYLATION [LARGE SCALE ANALYSIS] AT SER-64</scope>
    <scope>IDENTIFICATION BY MASS SPECTROMETRY [LARGE SCALE ANALYSIS]</scope>
    <source>
        <tissue>Cervix carcinoma</tissue>
    </source>
</reference>
<reference key="7">
    <citation type="journal article" date="2013" name="J. Proteome Res.">
        <title>Toward a comprehensive characterization of a human cancer cell phosphoproteome.</title>
        <authorList>
            <person name="Zhou H."/>
            <person name="Di Palma S."/>
            <person name="Preisinger C."/>
            <person name="Peng M."/>
            <person name="Polat A.N."/>
            <person name="Heck A.J."/>
            <person name="Mohammed S."/>
        </authorList>
    </citation>
    <scope>PHOSPHORYLATION [LARGE SCALE ANALYSIS] AT SER-64</scope>
    <scope>IDENTIFICATION BY MASS SPECTROMETRY [LARGE SCALE ANALYSIS]</scope>
    <source>
        <tissue>Cervix carcinoma</tissue>
        <tissue>Erythroleukemia</tissue>
    </source>
</reference>
<proteinExistence type="evidence at protein level"/>
<name>PKHG4_HUMAN</name>
<keyword id="KW-0025">Alternative splicing</keyword>
<keyword id="KW-0344">Guanine-nucleotide releasing factor</keyword>
<keyword id="KW-0597">Phosphoprotein</keyword>
<keyword id="KW-1267">Proteomics identification</keyword>
<keyword id="KW-1185">Reference proteome</keyword>
<evidence type="ECO:0000255" key="1">
    <source>
        <dbReference type="PROSITE-ProRule" id="PRU00062"/>
    </source>
</evidence>
<evidence type="ECO:0000255" key="2">
    <source>
        <dbReference type="PROSITE-ProRule" id="PRU00145"/>
    </source>
</evidence>
<evidence type="ECO:0000256" key="3">
    <source>
        <dbReference type="SAM" id="MobiDB-lite"/>
    </source>
</evidence>
<evidence type="ECO:0000269" key="4">
    <source>
    </source>
</evidence>
<evidence type="ECO:0000303" key="5">
    <source>
    </source>
</evidence>
<evidence type="ECO:0000303" key="6">
    <source>
    </source>
</evidence>
<evidence type="ECO:0000305" key="7"/>
<evidence type="ECO:0000305" key="8">
    <source>
    </source>
</evidence>
<evidence type="ECO:0000305" key="9">
    <source>
    </source>
</evidence>
<evidence type="ECO:0007744" key="10">
    <source>
    </source>
</evidence>
<evidence type="ECO:0007744" key="11">
    <source>
    </source>
</evidence>
<gene>
    <name type="primary">PLEKHG4</name>
    <name type="synonym">PRTPHN1</name>
</gene>
<organism>
    <name type="scientific">Homo sapiens</name>
    <name type="common">Human</name>
    <dbReference type="NCBI Taxonomy" id="9606"/>
    <lineage>
        <taxon>Eukaryota</taxon>
        <taxon>Metazoa</taxon>
        <taxon>Chordata</taxon>
        <taxon>Craniata</taxon>
        <taxon>Vertebrata</taxon>
        <taxon>Euteleostomi</taxon>
        <taxon>Mammalia</taxon>
        <taxon>Eutheria</taxon>
        <taxon>Euarchontoglires</taxon>
        <taxon>Primates</taxon>
        <taxon>Haplorrhini</taxon>
        <taxon>Catarrhini</taxon>
        <taxon>Hominidae</taxon>
        <taxon>Homo</taxon>
    </lineage>
</organism>
<dbReference type="EMBL" id="AB197663">
    <property type="protein sequence ID" value="BAE07054.1"/>
    <property type="molecule type" value="mRNA"/>
</dbReference>
<dbReference type="EMBL" id="AB197664">
    <property type="protein sequence ID" value="BAE07055.1"/>
    <property type="molecule type" value="mRNA"/>
</dbReference>
<dbReference type="EMBL" id="AK024475">
    <property type="protein sequence ID" value="BAB15765.1"/>
    <property type="status" value="ALT_INIT"/>
    <property type="molecule type" value="mRNA"/>
</dbReference>
<dbReference type="EMBL" id="BC054486">
    <property type="protein sequence ID" value="AAH54486.1"/>
    <property type="molecule type" value="mRNA"/>
</dbReference>
<dbReference type="EMBL" id="BC063501">
    <property type="protein sequence ID" value="AAH63501.1"/>
    <property type="molecule type" value="mRNA"/>
</dbReference>
<dbReference type="EMBL" id="BC082974">
    <property type="protein sequence ID" value="AAH82974.1"/>
    <property type="status" value="ALT_FRAME"/>
    <property type="molecule type" value="mRNA"/>
</dbReference>
<dbReference type="EMBL" id="AL117435">
    <property type="protein sequence ID" value="CAB55923.1"/>
    <property type="molecule type" value="mRNA"/>
</dbReference>
<dbReference type="CCDS" id="CCDS32466.1">
    <molecule id="Q58EX7-1"/>
</dbReference>
<dbReference type="CCDS" id="CCDS45512.1">
    <molecule id="Q58EX7-2"/>
</dbReference>
<dbReference type="PIR" id="T17233">
    <property type="entry name" value="T17233"/>
</dbReference>
<dbReference type="RefSeq" id="NP_001123199.1">
    <molecule id="Q58EX7-1"/>
    <property type="nucleotide sequence ID" value="NM_001129727.3"/>
</dbReference>
<dbReference type="RefSeq" id="NP_001123200.1">
    <molecule id="Q58EX7-1"/>
    <property type="nucleotide sequence ID" value="NM_001129728.2"/>
</dbReference>
<dbReference type="RefSeq" id="NP_001123201.1">
    <molecule id="Q58EX7-1"/>
    <property type="nucleotide sequence ID" value="NM_001129729.3"/>
</dbReference>
<dbReference type="RefSeq" id="NP_001123203.1">
    <molecule id="Q58EX7-2"/>
    <property type="nucleotide sequence ID" value="NM_001129731.3"/>
</dbReference>
<dbReference type="RefSeq" id="XP_011521287.1">
    <molecule id="Q58EX7-1"/>
    <property type="nucleotide sequence ID" value="XM_011522985.3"/>
</dbReference>
<dbReference type="RefSeq" id="XP_011521288.1">
    <molecule id="Q58EX7-1"/>
    <property type="nucleotide sequence ID" value="XM_011522986.3"/>
</dbReference>
<dbReference type="RefSeq" id="XP_011521289.1">
    <molecule id="Q58EX7-1"/>
    <property type="nucleotide sequence ID" value="XM_011522987.3"/>
</dbReference>
<dbReference type="RefSeq" id="XP_011521290.1">
    <molecule id="Q58EX7-1"/>
    <property type="nucleotide sequence ID" value="XM_011522988.3"/>
</dbReference>
<dbReference type="RefSeq" id="XP_054235981.1">
    <molecule id="Q58EX7-1"/>
    <property type="nucleotide sequence ID" value="XM_054380006.1"/>
</dbReference>
<dbReference type="RefSeq" id="XP_054235982.1">
    <molecule id="Q58EX7-1"/>
    <property type="nucleotide sequence ID" value="XM_054380007.1"/>
</dbReference>
<dbReference type="RefSeq" id="XP_054235983.1">
    <molecule id="Q58EX7-1"/>
    <property type="nucleotide sequence ID" value="XM_054380008.1"/>
</dbReference>
<dbReference type="RefSeq" id="XP_054235984.1">
    <molecule id="Q58EX7-1"/>
    <property type="nucleotide sequence ID" value="XM_054380009.1"/>
</dbReference>
<dbReference type="SMR" id="Q58EX7"/>
<dbReference type="BioGRID" id="117402">
    <property type="interactions" value="158"/>
</dbReference>
<dbReference type="FunCoup" id="Q58EX7">
    <property type="interactions" value="712"/>
</dbReference>
<dbReference type="IntAct" id="Q58EX7">
    <property type="interactions" value="121"/>
</dbReference>
<dbReference type="MINT" id="Q58EX7"/>
<dbReference type="STRING" id="9606.ENSP00000353646"/>
<dbReference type="GlyGen" id="Q58EX7">
    <property type="glycosylation" value="1 site, 1 O-linked glycan (1 site)"/>
</dbReference>
<dbReference type="iPTMnet" id="Q58EX7"/>
<dbReference type="PhosphoSitePlus" id="Q58EX7"/>
<dbReference type="BioMuta" id="PLEKHG4"/>
<dbReference type="DMDM" id="74755121"/>
<dbReference type="jPOST" id="Q58EX7"/>
<dbReference type="MassIVE" id="Q58EX7"/>
<dbReference type="PaxDb" id="9606-ENSP00000353646"/>
<dbReference type="PeptideAtlas" id="Q58EX7"/>
<dbReference type="ProteomicsDB" id="62615">
    <molecule id="Q58EX7-1"/>
</dbReference>
<dbReference type="ProteomicsDB" id="62616">
    <molecule id="Q58EX7-2"/>
</dbReference>
<dbReference type="ProteomicsDB" id="62617">
    <molecule id="Q58EX7-3"/>
</dbReference>
<dbReference type="Pumba" id="Q58EX7"/>
<dbReference type="Antibodypedia" id="29493">
    <property type="antibodies" value="90 antibodies from 21 providers"/>
</dbReference>
<dbReference type="DNASU" id="25894"/>
<dbReference type="Ensembl" id="ENST00000360461.9">
    <molecule id="Q58EX7-1"/>
    <property type="protein sequence ID" value="ENSP00000353646.5"/>
    <property type="gene ID" value="ENSG00000196155.13"/>
</dbReference>
<dbReference type="Ensembl" id="ENST00000379344.8">
    <molecule id="Q58EX7-1"/>
    <property type="protein sequence ID" value="ENSP00000368649.3"/>
    <property type="gene ID" value="ENSG00000196155.13"/>
</dbReference>
<dbReference type="Ensembl" id="ENST00000393966.1">
    <molecule id="Q58EX7-3"/>
    <property type="protein sequence ID" value="ENSP00000462601.1"/>
    <property type="gene ID" value="ENSG00000196155.13"/>
</dbReference>
<dbReference type="Ensembl" id="ENST00000427155.6">
    <molecule id="Q58EX7-1"/>
    <property type="protein sequence ID" value="ENSP00000401118.2"/>
    <property type="gene ID" value="ENSG00000196155.13"/>
</dbReference>
<dbReference type="Ensembl" id="ENST00000450733.5">
    <molecule id="Q58EX7-2"/>
    <property type="protein sequence ID" value="ENSP00000398030.1"/>
    <property type="gene ID" value="ENSG00000196155.13"/>
</dbReference>
<dbReference type="Ensembl" id="ENST00000563969.5">
    <molecule id="Q58EX7-3"/>
    <property type="protein sequence ID" value="ENSP00000457086.1"/>
    <property type="gene ID" value="ENSG00000196155.13"/>
</dbReference>
<dbReference type="GeneID" id="25894"/>
<dbReference type="KEGG" id="hsa:25894"/>
<dbReference type="MANE-Select" id="ENST00000379344.8">
    <property type="protein sequence ID" value="ENSP00000368649.3"/>
    <property type="RefSeq nucleotide sequence ID" value="NM_001129729.3"/>
    <property type="RefSeq protein sequence ID" value="NP_001123201.1"/>
</dbReference>
<dbReference type="UCSC" id="uc002eso.5">
    <molecule id="Q58EX7-1"/>
    <property type="organism name" value="human"/>
</dbReference>
<dbReference type="AGR" id="HGNC:24501"/>
<dbReference type="CTD" id="25894"/>
<dbReference type="DisGeNET" id="25894"/>
<dbReference type="GeneCards" id="PLEKHG4"/>
<dbReference type="HGNC" id="HGNC:24501">
    <property type="gene designation" value="PLEKHG4"/>
</dbReference>
<dbReference type="HPA" id="ENSG00000196155">
    <property type="expression patterns" value="Tissue enhanced (testis)"/>
</dbReference>
<dbReference type="MalaCards" id="PLEKHG4"/>
<dbReference type="MIM" id="609526">
    <property type="type" value="gene"/>
</dbReference>
<dbReference type="neXtProt" id="NX_Q58EX7"/>
<dbReference type="OpenTargets" id="ENSG00000196155"/>
<dbReference type="Orphanet" id="98765">
    <property type="disease" value="Spinocerebellar ataxia type 4"/>
</dbReference>
<dbReference type="PharmGKB" id="PA142671163"/>
<dbReference type="VEuPathDB" id="HostDB:ENSG00000196155"/>
<dbReference type="eggNOG" id="KOG0689">
    <property type="taxonomic scope" value="Eukaryota"/>
</dbReference>
<dbReference type="GeneTree" id="ENSGT00940000158845"/>
<dbReference type="HOGENOM" id="CLU_1408307_0_0_1"/>
<dbReference type="InParanoid" id="Q58EX7"/>
<dbReference type="OMA" id="HGHATDW"/>
<dbReference type="OrthoDB" id="1594986at2759"/>
<dbReference type="PAN-GO" id="Q58EX7">
    <property type="GO annotations" value="0 GO annotations based on evolutionary models"/>
</dbReference>
<dbReference type="PhylomeDB" id="Q58EX7"/>
<dbReference type="TreeFam" id="TF334329"/>
<dbReference type="PathwayCommons" id="Q58EX7"/>
<dbReference type="Reactome" id="R-HSA-8980692">
    <property type="pathway name" value="RHOA GTPase cycle"/>
</dbReference>
<dbReference type="Reactome" id="R-HSA-9013148">
    <property type="pathway name" value="CDC42 GTPase cycle"/>
</dbReference>
<dbReference type="Reactome" id="R-HSA-9013149">
    <property type="pathway name" value="RAC1 GTPase cycle"/>
</dbReference>
<dbReference type="SignaLink" id="Q58EX7"/>
<dbReference type="SIGNOR" id="Q58EX7"/>
<dbReference type="BioGRID-ORCS" id="25894">
    <property type="hits" value="21 hits in 1160 CRISPR screens"/>
</dbReference>
<dbReference type="ChiTaRS" id="PLEKHG4">
    <property type="organism name" value="human"/>
</dbReference>
<dbReference type="GeneWiki" id="PLEKHG4"/>
<dbReference type="GenomeRNAi" id="25894"/>
<dbReference type="Pharos" id="Q58EX7">
    <property type="development level" value="Tbio"/>
</dbReference>
<dbReference type="PRO" id="PR:Q58EX7"/>
<dbReference type="Proteomes" id="UP000005640">
    <property type="component" value="Chromosome 16"/>
</dbReference>
<dbReference type="RNAct" id="Q58EX7">
    <property type="molecule type" value="protein"/>
</dbReference>
<dbReference type="Bgee" id="ENSG00000196155">
    <property type="expression patterns" value="Expressed in right testis and 133 other cell types or tissues"/>
</dbReference>
<dbReference type="ExpressionAtlas" id="Q58EX7">
    <property type="expression patterns" value="baseline and differential"/>
</dbReference>
<dbReference type="GO" id="GO:0005737">
    <property type="term" value="C:cytoplasm"/>
    <property type="evidence" value="ECO:0000318"/>
    <property type="project" value="GO_Central"/>
</dbReference>
<dbReference type="GO" id="GO:0005829">
    <property type="term" value="C:cytosol"/>
    <property type="evidence" value="ECO:0000304"/>
    <property type="project" value="Reactome"/>
</dbReference>
<dbReference type="GO" id="GO:0019898">
    <property type="term" value="C:extrinsic component of membrane"/>
    <property type="evidence" value="ECO:0000318"/>
    <property type="project" value="GO_Central"/>
</dbReference>
<dbReference type="GO" id="GO:0005886">
    <property type="term" value="C:plasma membrane"/>
    <property type="evidence" value="ECO:0000318"/>
    <property type="project" value="GO_Central"/>
</dbReference>
<dbReference type="GO" id="GO:0005085">
    <property type="term" value="F:guanyl-nucleotide exchange factor activity"/>
    <property type="evidence" value="ECO:0000318"/>
    <property type="project" value="GO_Central"/>
</dbReference>
<dbReference type="GO" id="GO:0007411">
    <property type="term" value="P:axon guidance"/>
    <property type="evidence" value="ECO:0000318"/>
    <property type="project" value="GO_Central"/>
</dbReference>
<dbReference type="GO" id="GO:0051056">
    <property type="term" value="P:regulation of small GTPase mediated signal transduction"/>
    <property type="evidence" value="ECO:0000304"/>
    <property type="project" value="Reactome"/>
</dbReference>
<dbReference type="CDD" id="cd13242">
    <property type="entry name" value="PH_puratrophin-1"/>
    <property type="match status" value="1"/>
</dbReference>
<dbReference type="CDD" id="cd00160">
    <property type="entry name" value="RhoGEF"/>
    <property type="match status" value="1"/>
</dbReference>
<dbReference type="FunFam" id="2.30.29.30:FF:000078">
    <property type="entry name" value="Guanine nucleotide exchange factor DBS"/>
    <property type="match status" value="1"/>
</dbReference>
<dbReference type="FunFam" id="1.20.900.10:FF:000028">
    <property type="entry name" value="Puratrophin-1-like, isoform D"/>
    <property type="match status" value="1"/>
</dbReference>
<dbReference type="Gene3D" id="1.20.900.10">
    <property type="entry name" value="Dbl homology (DH) domain"/>
    <property type="match status" value="1"/>
</dbReference>
<dbReference type="Gene3D" id="2.30.29.30">
    <property type="entry name" value="Pleckstrin-homology domain (PH domain)/Phosphotyrosine-binding domain (PTB)"/>
    <property type="match status" value="1"/>
</dbReference>
<dbReference type="InterPro" id="IPR036865">
    <property type="entry name" value="CRAL-TRIO_dom_sf"/>
</dbReference>
<dbReference type="InterPro" id="IPR035899">
    <property type="entry name" value="DBL_dom_sf"/>
</dbReference>
<dbReference type="InterPro" id="IPR000219">
    <property type="entry name" value="DH_dom"/>
</dbReference>
<dbReference type="InterPro" id="IPR011993">
    <property type="entry name" value="PH-like_dom_sf"/>
</dbReference>
<dbReference type="InterPro" id="IPR001849">
    <property type="entry name" value="PH_domain"/>
</dbReference>
<dbReference type="InterPro" id="IPR052231">
    <property type="entry name" value="Rho_GEF_signaling-related"/>
</dbReference>
<dbReference type="InterPro" id="IPR055251">
    <property type="entry name" value="SOS1_NGEF_PH"/>
</dbReference>
<dbReference type="PANTHER" id="PTHR45845:SF4">
    <property type="entry name" value="PLECKSTRIN HOMOLOGY DOMAIN CONTAINING, FAMILY G (WITH RHOGEF DOMAIN) MEMBER 4"/>
    <property type="match status" value="1"/>
</dbReference>
<dbReference type="PANTHER" id="PTHR45845">
    <property type="entry name" value="RHO GUANINE NUCLEOTIDE EXCHANGE FACTOR-RELATED"/>
    <property type="match status" value="1"/>
</dbReference>
<dbReference type="Pfam" id="PF00621">
    <property type="entry name" value="RhoGEF"/>
    <property type="match status" value="1"/>
</dbReference>
<dbReference type="Pfam" id="PF22697">
    <property type="entry name" value="SOS1_NGEF_PH"/>
    <property type="match status" value="1"/>
</dbReference>
<dbReference type="SMART" id="SM00233">
    <property type="entry name" value="PH"/>
    <property type="match status" value="1"/>
</dbReference>
<dbReference type="SMART" id="SM00325">
    <property type="entry name" value="RhoGEF"/>
    <property type="match status" value="1"/>
</dbReference>
<dbReference type="SUPFAM" id="SSF52087">
    <property type="entry name" value="CRAL/TRIO domain"/>
    <property type="match status" value="1"/>
</dbReference>
<dbReference type="SUPFAM" id="SSF48065">
    <property type="entry name" value="DBL homology domain (DH-domain)"/>
    <property type="match status" value="1"/>
</dbReference>
<dbReference type="SUPFAM" id="SSF50729">
    <property type="entry name" value="PH domain-like"/>
    <property type="match status" value="1"/>
</dbReference>
<dbReference type="PROSITE" id="PS50010">
    <property type="entry name" value="DH_2"/>
    <property type="match status" value="1"/>
</dbReference>
<dbReference type="PROSITE" id="PS50003">
    <property type="entry name" value="PH_DOMAIN"/>
    <property type="match status" value="1"/>
</dbReference>
<feature type="chain" id="PRO_0000224996" description="Puratrophin-1">
    <location>
        <begin position="1"/>
        <end position="1191"/>
    </location>
</feature>
<feature type="domain" description="DH" evidence="1">
    <location>
        <begin position="732"/>
        <end position="908"/>
    </location>
</feature>
<feature type="domain" description="PH" evidence="2">
    <location>
        <begin position="920"/>
        <end position="1027"/>
    </location>
</feature>
<feature type="region of interest" description="Disordered" evidence="3">
    <location>
        <begin position="1"/>
        <end position="152"/>
    </location>
</feature>
<feature type="region of interest" description="Disordered" evidence="3">
    <location>
        <begin position="707"/>
        <end position="728"/>
    </location>
</feature>
<feature type="region of interest" description="Disordered" evidence="3">
    <location>
        <begin position="1150"/>
        <end position="1176"/>
    </location>
</feature>
<feature type="compositionally biased region" description="Polar residues" evidence="3">
    <location>
        <begin position="111"/>
        <end position="120"/>
    </location>
</feature>
<feature type="compositionally biased region" description="Low complexity" evidence="3">
    <location>
        <begin position="1159"/>
        <end position="1176"/>
    </location>
</feature>
<feature type="modified residue" description="Phosphoserine" evidence="10 11">
    <location>
        <position position="64"/>
    </location>
</feature>
<feature type="splice variant" id="VSP_017329" description="In isoform 2." evidence="5">
    <location>
        <begin position="118"/>
        <end position="198"/>
    </location>
</feature>
<feature type="splice variant" id="VSP_017330" description="In isoform 3." evidence="6">
    <original>APSGSGLPKPADCLLAQDLCWELLASG</original>
    <variation>GKEGWAREVWEGNGDAWRDECQDFGGL</variation>
    <location>
        <begin position="167"/>
        <end position="193"/>
    </location>
</feature>
<feature type="splice variant" id="VSP_017331" description="In isoform 3." evidence="6">
    <location>
        <begin position="194"/>
        <end position="1191"/>
    </location>
</feature>
<feature type="sequence variant" id="VAR_050509" description="In dbSNP:rs11860295.">
    <original>T</original>
    <variation>I</variation>
    <location>
        <position position="412"/>
    </location>
</feature>
<feature type="sequence variant" id="VAR_050510" description="In dbSNP:rs8044843.">
    <original>D</original>
    <variation>G</variation>
    <location>
        <position position="525"/>
    </location>
</feature>
<feature type="sequence variant" id="VAR_050511" description="In dbSNP:rs3868142.">
    <original>R</original>
    <variation>H</variation>
    <location>
        <position position="830"/>
    </location>
</feature>
<feature type="sequence variant" id="VAR_061519" description="In dbSNP:rs56077142.">
    <original>R</original>
    <variation>H</variation>
    <location>
        <position position="1064"/>
    </location>
</feature>
<feature type="sequence variant" id="VAR_050512" description="In dbSNP:rs17680862.">
    <original>S</original>
    <variation>T</variation>
    <location>
        <position position="1090"/>
    </location>
</feature>
<feature type="sequence conflict" description="In Ref. 3; AAH54486." evidence="7" ref="3">
    <original>W</original>
    <variation>L</variation>
    <location>
        <position position="474"/>
    </location>
</feature>
<feature type="sequence conflict" description="In Ref. 3; AAH54486." evidence="7" ref="3">
    <original>R</original>
    <variation>G</variation>
    <location>
        <position position="998"/>
    </location>
</feature>
<feature type="sequence conflict" description="In Ref. 4; CAB55923." evidence="7" ref="4">
    <original>P</original>
    <variation>L</variation>
    <location>
        <position position="1134"/>
    </location>
</feature>
<accession>Q58EX7</accession>
<accession>Q4G0J8</accession>
<accession>Q4H485</accession>
<accession>Q56A69</accession>
<accession>Q9H7K4</accession>
<accession>Q9UFW0</accession>
<sequence>MERPLENGDESPDSQGHATDWRFAVCSFRDAWEEEEPASQMHVKDPGPPRPPAGATQDEELQGSPLSRKFQLPPAADESGDAQRGTVESSSVLSEGPGPSGVESLLCPMSSHLSLAQGESDTPGVGLVGDPGPSRAMPSGLSPGALDSDPVGLGDPLSEISKLLEAAPSGSGLPKPADCLLAQDLCWELLASGMATLPGTRDVQGRAVLLLCAHSPAWLQSECSSQELIRLLLYLRSIPRPEVQALGLTVLVDARICAPSSSLFSGLSQLQEAAPGAVYQVLLVGSTLLKEVPSGLQLEQLPSQSLLTHIPTAGLPTSLGGGLPYCHQAWLDFRRRLEALLQNCQAACALLQGAIESVKAVPQPMEPGEVGQLLQQTEVLMQQVLDSPWLAWLQCQGGRELTWLKQEVPEVTLSPDYRTAMDKADELYDRVDGLLHQLTLQSNQRIQALELVQTLEARESGLHQIEVWLQQVGWPALEEAGEPSLDMLLQAQGSFQELYQVAQEQVRQGEKFLQPLTGWEAAELDPPGARFLALRAQLTEFSRALAQRCQRLADAERLFQLFREALTWAEEGQRVLAELEQERPGVVLQQLQLHWTRHPDLPPAHFRKMWALATGLGSEAIRQECRWAWARCQDTWLALDQKLEASLKLPPVGSTASLCVSQVPAAPAHPPLRKAYSFDRNLGQSLSEPACHCHHAATIAACRRPEAGGGALPQASPTVPPPGSSDPRSLNRLQLVLAEMVATEREYVRALEYTMENYFPELDRPDVPQGLRGQRAHLFGNLEKLRDFHCHFFLRELEACTRHPPRVAYAFLRHRVQFGMYALYSKNKPRSDALMSSYGHTFFKDKQQALGDHLDLASYLLKPIQRMGKYALLLQELARACGGPTQELSALREAQSLVHFQLRHGNDLLAMDAIQGCDVNLKEQGQLVRQDEFVVRTGRHKSVRRIFLFEELLLFSKPRHGPTGVDTFAYKRSFKMADLGLTECCGNSNLRFEIWFRRRKARDTFVLQASSLAIKQAWTADISHLLWRQAVHNKEVRMAEMVSMGVGNKAFRDIAPSEEAINDRTVNYVLKCREVRSRASIAVAPFDHDSLYLGASNSLPGDPASCSVLGSLNLHLYRDPALLGLRCPLYPSFPEEAALEAEAELGGQPSLTAEDSEISSQCPSASGSSGSDSSCVSGQALGRGLEDLPCV</sequence>
<protein>
    <recommendedName>
        <fullName>Puratrophin-1</fullName>
    </recommendedName>
    <alternativeName>
        <fullName>Pleckstrin homology domain-containing family G member 4</fullName>
        <shortName>PH domain-containing family G member 4</shortName>
    </alternativeName>
    <alternativeName>
        <fullName>Purkinje cell atrophy-associated protein 1</fullName>
    </alternativeName>
</protein>